<evidence type="ECO:0000255" key="1">
    <source>
        <dbReference type="HAMAP-Rule" id="MF_00639"/>
    </source>
</evidence>
<name>MURD_LISIN</name>
<reference key="1">
    <citation type="journal article" date="2001" name="Science">
        <title>Comparative genomics of Listeria species.</title>
        <authorList>
            <person name="Glaser P."/>
            <person name="Frangeul L."/>
            <person name="Buchrieser C."/>
            <person name="Rusniok C."/>
            <person name="Amend A."/>
            <person name="Baquero F."/>
            <person name="Berche P."/>
            <person name="Bloecker H."/>
            <person name="Brandt P."/>
            <person name="Chakraborty T."/>
            <person name="Charbit A."/>
            <person name="Chetouani F."/>
            <person name="Couve E."/>
            <person name="de Daruvar A."/>
            <person name="Dehoux P."/>
            <person name="Domann E."/>
            <person name="Dominguez-Bernal G."/>
            <person name="Duchaud E."/>
            <person name="Durant L."/>
            <person name="Dussurget O."/>
            <person name="Entian K.-D."/>
            <person name="Fsihi H."/>
            <person name="Garcia-del Portillo F."/>
            <person name="Garrido P."/>
            <person name="Gautier L."/>
            <person name="Goebel W."/>
            <person name="Gomez-Lopez N."/>
            <person name="Hain T."/>
            <person name="Hauf J."/>
            <person name="Jackson D."/>
            <person name="Jones L.-M."/>
            <person name="Kaerst U."/>
            <person name="Kreft J."/>
            <person name="Kuhn M."/>
            <person name="Kunst F."/>
            <person name="Kurapkat G."/>
            <person name="Madueno E."/>
            <person name="Maitournam A."/>
            <person name="Mata Vicente J."/>
            <person name="Ng E."/>
            <person name="Nedjari H."/>
            <person name="Nordsiek G."/>
            <person name="Novella S."/>
            <person name="de Pablos B."/>
            <person name="Perez-Diaz J.-C."/>
            <person name="Purcell R."/>
            <person name="Remmel B."/>
            <person name="Rose M."/>
            <person name="Schlueter T."/>
            <person name="Simoes N."/>
            <person name="Tierrez A."/>
            <person name="Vazquez-Boland J.-A."/>
            <person name="Voss H."/>
            <person name="Wehland J."/>
            <person name="Cossart P."/>
        </authorList>
    </citation>
    <scope>NUCLEOTIDE SEQUENCE [LARGE SCALE GENOMIC DNA]</scope>
    <source>
        <strain>ATCC BAA-680 / CLIP 11262</strain>
    </source>
</reference>
<gene>
    <name evidence="1" type="primary">murD</name>
    <name type="ordered locus">lin2142</name>
</gene>
<protein>
    <recommendedName>
        <fullName evidence="1">UDP-N-acetylmuramoylalanine--D-glutamate ligase</fullName>
        <ecNumber evidence="1">6.3.2.9</ecNumber>
    </recommendedName>
    <alternativeName>
        <fullName evidence="1">D-glutamic acid-adding enzyme</fullName>
    </alternativeName>
    <alternativeName>
        <fullName evidence="1">UDP-N-acetylmuramoyl-L-alanyl-D-glutamate synthetase</fullName>
    </alternativeName>
</protein>
<proteinExistence type="inferred from homology"/>
<organism>
    <name type="scientific">Listeria innocua serovar 6a (strain ATCC BAA-680 / CLIP 11262)</name>
    <dbReference type="NCBI Taxonomy" id="272626"/>
    <lineage>
        <taxon>Bacteria</taxon>
        <taxon>Bacillati</taxon>
        <taxon>Bacillota</taxon>
        <taxon>Bacilli</taxon>
        <taxon>Bacillales</taxon>
        <taxon>Listeriaceae</taxon>
        <taxon>Listeria</taxon>
    </lineage>
</organism>
<accession>Q929Y1</accession>
<dbReference type="EC" id="6.3.2.9" evidence="1"/>
<dbReference type="EMBL" id="AL596171">
    <property type="protein sequence ID" value="CAC97372.1"/>
    <property type="molecule type" value="Genomic_DNA"/>
</dbReference>
<dbReference type="PIR" id="AD1700">
    <property type="entry name" value="AD1700"/>
</dbReference>
<dbReference type="RefSeq" id="WP_010991778.1">
    <property type="nucleotide sequence ID" value="NC_003212.1"/>
</dbReference>
<dbReference type="SMR" id="Q929Y1"/>
<dbReference type="STRING" id="272626.gene:17566500"/>
<dbReference type="GeneID" id="93235481"/>
<dbReference type="KEGG" id="lin:murD"/>
<dbReference type="eggNOG" id="COG0771">
    <property type="taxonomic scope" value="Bacteria"/>
</dbReference>
<dbReference type="HOGENOM" id="CLU_032540_0_1_9"/>
<dbReference type="OrthoDB" id="9809796at2"/>
<dbReference type="UniPathway" id="UPA00219"/>
<dbReference type="Proteomes" id="UP000002513">
    <property type="component" value="Chromosome"/>
</dbReference>
<dbReference type="GO" id="GO:0005737">
    <property type="term" value="C:cytoplasm"/>
    <property type="evidence" value="ECO:0007669"/>
    <property type="project" value="UniProtKB-SubCell"/>
</dbReference>
<dbReference type="GO" id="GO:0005524">
    <property type="term" value="F:ATP binding"/>
    <property type="evidence" value="ECO:0007669"/>
    <property type="project" value="UniProtKB-UniRule"/>
</dbReference>
<dbReference type="GO" id="GO:0004326">
    <property type="term" value="F:tetrahydrofolylpolyglutamate synthase activity"/>
    <property type="evidence" value="ECO:0007669"/>
    <property type="project" value="InterPro"/>
</dbReference>
<dbReference type="GO" id="GO:0008764">
    <property type="term" value="F:UDP-N-acetylmuramoylalanine-D-glutamate ligase activity"/>
    <property type="evidence" value="ECO:0007669"/>
    <property type="project" value="UniProtKB-UniRule"/>
</dbReference>
<dbReference type="GO" id="GO:0051301">
    <property type="term" value="P:cell division"/>
    <property type="evidence" value="ECO:0007669"/>
    <property type="project" value="UniProtKB-KW"/>
</dbReference>
<dbReference type="GO" id="GO:0071555">
    <property type="term" value="P:cell wall organization"/>
    <property type="evidence" value="ECO:0007669"/>
    <property type="project" value="UniProtKB-KW"/>
</dbReference>
<dbReference type="GO" id="GO:0009252">
    <property type="term" value="P:peptidoglycan biosynthetic process"/>
    <property type="evidence" value="ECO:0007669"/>
    <property type="project" value="UniProtKB-UniRule"/>
</dbReference>
<dbReference type="GO" id="GO:0008360">
    <property type="term" value="P:regulation of cell shape"/>
    <property type="evidence" value="ECO:0007669"/>
    <property type="project" value="UniProtKB-KW"/>
</dbReference>
<dbReference type="Gene3D" id="3.90.190.20">
    <property type="entry name" value="Mur ligase, C-terminal domain"/>
    <property type="match status" value="1"/>
</dbReference>
<dbReference type="Gene3D" id="3.40.1190.10">
    <property type="entry name" value="Mur-like, catalytic domain"/>
    <property type="match status" value="1"/>
</dbReference>
<dbReference type="Gene3D" id="3.40.50.720">
    <property type="entry name" value="NAD(P)-binding Rossmann-like Domain"/>
    <property type="match status" value="1"/>
</dbReference>
<dbReference type="HAMAP" id="MF_00639">
    <property type="entry name" value="MurD"/>
    <property type="match status" value="1"/>
</dbReference>
<dbReference type="InterPro" id="IPR018109">
    <property type="entry name" value="Folylpolyglutamate_synth_CS"/>
</dbReference>
<dbReference type="InterPro" id="IPR036565">
    <property type="entry name" value="Mur-like_cat_sf"/>
</dbReference>
<dbReference type="InterPro" id="IPR004101">
    <property type="entry name" value="Mur_ligase_C"/>
</dbReference>
<dbReference type="InterPro" id="IPR036615">
    <property type="entry name" value="Mur_ligase_C_dom_sf"/>
</dbReference>
<dbReference type="InterPro" id="IPR013221">
    <property type="entry name" value="Mur_ligase_cen"/>
</dbReference>
<dbReference type="InterPro" id="IPR005762">
    <property type="entry name" value="MurD"/>
</dbReference>
<dbReference type="NCBIfam" id="TIGR01087">
    <property type="entry name" value="murD"/>
    <property type="match status" value="1"/>
</dbReference>
<dbReference type="PANTHER" id="PTHR43692">
    <property type="entry name" value="UDP-N-ACETYLMURAMOYLALANINE--D-GLUTAMATE LIGASE"/>
    <property type="match status" value="1"/>
</dbReference>
<dbReference type="PANTHER" id="PTHR43692:SF1">
    <property type="entry name" value="UDP-N-ACETYLMURAMOYLALANINE--D-GLUTAMATE LIGASE"/>
    <property type="match status" value="1"/>
</dbReference>
<dbReference type="Pfam" id="PF02875">
    <property type="entry name" value="Mur_ligase_C"/>
    <property type="match status" value="1"/>
</dbReference>
<dbReference type="Pfam" id="PF08245">
    <property type="entry name" value="Mur_ligase_M"/>
    <property type="match status" value="1"/>
</dbReference>
<dbReference type="Pfam" id="PF21799">
    <property type="entry name" value="MurD-like_N"/>
    <property type="match status" value="1"/>
</dbReference>
<dbReference type="SUPFAM" id="SSF51984">
    <property type="entry name" value="MurCD N-terminal domain"/>
    <property type="match status" value="1"/>
</dbReference>
<dbReference type="SUPFAM" id="SSF53623">
    <property type="entry name" value="MurD-like peptide ligases, catalytic domain"/>
    <property type="match status" value="1"/>
</dbReference>
<dbReference type="SUPFAM" id="SSF53244">
    <property type="entry name" value="MurD-like peptide ligases, peptide-binding domain"/>
    <property type="match status" value="1"/>
</dbReference>
<feature type="chain" id="PRO_0000109038" description="UDP-N-acetylmuramoylalanine--D-glutamate ligase">
    <location>
        <begin position="1"/>
        <end position="455"/>
    </location>
</feature>
<feature type="binding site" evidence="1">
    <location>
        <begin position="119"/>
        <end position="125"/>
    </location>
    <ligand>
        <name>ATP</name>
        <dbReference type="ChEBI" id="CHEBI:30616"/>
    </ligand>
</feature>
<comment type="function">
    <text evidence="1">Cell wall formation. Catalyzes the addition of glutamate to the nucleotide precursor UDP-N-acetylmuramoyl-L-alanine (UMA).</text>
</comment>
<comment type="catalytic activity">
    <reaction evidence="1">
        <text>UDP-N-acetyl-alpha-D-muramoyl-L-alanine + D-glutamate + ATP = UDP-N-acetyl-alpha-D-muramoyl-L-alanyl-D-glutamate + ADP + phosphate + H(+)</text>
        <dbReference type="Rhea" id="RHEA:16429"/>
        <dbReference type="ChEBI" id="CHEBI:15378"/>
        <dbReference type="ChEBI" id="CHEBI:29986"/>
        <dbReference type="ChEBI" id="CHEBI:30616"/>
        <dbReference type="ChEBI" id="CHEBI:43474"/>
        <dbReference type="ChEBI" id="CHEBI:83898"/>
        <dbReference type="ChEBI" id="CHEBI:83900"/>
        <dbReference type="ChEBI" id="CHEBI:456216"/>
        <dbReference type="EC" id="6.3.2.9"/>
    </reaction>
</comment>
<comment type="pathway">
    <text evidence="1">Cell wall biogenesis; peptidoglycan biosynthesis.</text>
</comment>
<comment type="subcellular location">
    <subcellularLocation>
        <location evidence="1">Cytoplasm</location>
    </subcellularLocation>
</comment>
<comment type="similarity">
    <text evidence="1">Belongs to the MurCDEF family.</text>
</comment>
<keyword id="KW-0067">ATP-binding</keyword>
<keyword id="KW-0131">Cell cycle</keyword>
<keyword id="KW-0132">Cell division</keyword>
<keyword id="KW-0133">Cell shape</keyword>
<keyword id="KW-0961">Cell wall biogenesis/degradation</keyword>
<keyword id="KW-0963">Cytoplasm</keyword>
<keyword id="KW-0436">Ligase</keyword>
<keyword id="KW-0547">Nucleotide-binding</keyword>
<keyword id="KW-0573">Peptidoglycan synthesis</keyword>
<sequence>MKKIEMYHHKKVLVLGLARSGVSAATIMHKLGAFVTVNDQKPFSENPEAQGLLEQGIKVICGSHPIELLDEGFELVIKNPGIPYNNPMIEKALKLKIPVITEVELAYQISEAPIVGITGTNGKTTTTTIIHHMLNAHKENSSLLAGNIGFPASAVAENATSDQYISMELSSFQLMGVQTFKPHISVITNIYEAHLDYHTDRSEYVQAKWHIQQNQTADDFLVINWDQEELKNLTKQTKAQVIPFSTTQRLEQGSYVQNGNIMFDDEVIGSRDSILLPGEHNLENILASVAVAKTLGVTNEEIMYVLETFKGVEHRTQFVVEWQGRKFYNDSKATNILATQSALKGFKNPVVLLAGGLDRGNSFDELLPFFKNVKSLIVFGETADKIGRVGKIAGIEVHYVDDVEAAVPVAYRESAPGDIILLSPACASWDQYRTFEVRGNAYMDAISELIEEVEK</sequence>